<name>DCAF1_CAEEL</name>
<reference key="1">
    <citation type="journal article" date="1998" name="Science">
        <title>Genome sequence of the nematode C. elegans: a platform for investigating biology.</title>
        <authorList>
            <consortium name="The C. elegans sequencing consortium"/>
        </authorList>
    </citation>
    <scope>NUCLEOTIDE SEQUENCE [LARGE SCALE GENOMIC DNA]</scope>
    <scope>ALTERNATIVE SPLICING</scope>
    <source>
        <strain>Bristol N2</strain>
    </source>
</reference>
<gene>
    <name type="primary">dcaf-1</name>
    <name type="ORF">ZK1251.9</name>
</gene>
<dbReference type="EMBL" id="Z68222">
    <property type="protein sequence ID" value="CAA92505.3"/>
    <property type="molecule type" value="Genomic_DNA"/>
</dbReference>
<dbReference type="EMBL" id="Z68218">
    <property type="protein sequence ID" value="CAA92505.3"/>
    <property type="status" value="JOINED"/>
    <property type="molecule type" value="Genomic_DNA"/>
</dbReference>
<dbReference type="PIR" id="B88789">
    <property type="entry name" value="B88789"/>
</dbReference>
<dbReference type="PIR" id="T23210">
    <property type="entry name" value="T23210"/>
</dbReference>
<dbReference type="RefSeq" id="NP_501725.2">
    <property type="nucleotide sequence ID" value="NM_069324.5"/>
</dbReference>
<dbReference type="SMR" id="Q21106"/>
<dbReference type="BioGRID" id="42908">
    <property type="interactions" value="2"/>
</dbReference>
<dbReference type="FunCoup" id="Q21106">
    <property type="interactions" value="2875"/>
</dbReference>
<dbReference type="STRING" id="6239.ZK1251.9a.1"/>
<dbReference type="PaxDb" id="6239-ZK1251.9"/>
<dbReference type="PeptideAtlas" id="Q21106"/>
<dbReference type="EnsemblMetazoa" id="ZK1251.9a.1">
    <property type="protein sequence ID" value="ZK1251.9a.1"/>
    <property type="gene ID" value="WBGene00014243"/>
</dbReference>
<dbReference type="GeneID" id="177804"/>
<dbReference type="KEGG" id="cel:CELE_ZK1251.9"/>
<dbReference type="UCSC" id="ZK1251.9">
    <property type="organism name" value="c. elegans"/>
</dbReference>
<dbReference type="AGR" id="WB:WBGene00014243"/>
<dbReference type="CTD" id="177804"/>
<dbReference type="WormBase" id="ZK1251.9a">
    <property type="protein sequence ID" value="CE33014"/>
    <property type="gene ID" value="WBGene00014243"/>
    <property type="gene designation" value="dcaf-1"/>
</dbReference>
<dbReference type="eggNOG" id="KOG1832">
    <property type="taxonomic scope" value="Eukaryota"/>
</dbReference>
<dbReference type="GeneTree" id="ENSGT00390000005874"/>
<dbReference type="HOGENOM" id="CLU_001785_1_0_1"/>
<dbReference type="InParanoid" id="Q21106"/>
<dbReference type="OMA" id="ECSQDQA"/>
<dbReference type="OrthoDB" id="27563at2759"/>
<dbReference type="PhylomeDB" id="Q21106"/>
<dbReference type="Reactome" id="R-CEL-983168">
    <property type="pathway name" value="Antigen processing: Ubiquitination &amp; Proteasome degradation"/>
</dbReference>
<dbReference type="UniPathway" id="UPA00143"/>
<dbReference type="PRO" id="PR:Q21106"/>
<dbReference type="Proteomes" id="UP000001940">
    <property type="component" value="Chromosome IV"/>
</dbReference>
<dbReference type="Bgee" id="WBGene00014243">
    <property type="expression patterns" value="Expressed in adult organism and 4 other cell types or tissues"/>
</dbReference>
<dbReference type="ExpressionAtlas" id="Q21106">
    <property type="expression patterns" value="baseline and differential"/>
</dbReference>
<dbReference type="GO" id="GO:0080008">
    <property type="term" value="C:Cul4-RING E3 ubiquitin ligase complex"/>
    <property type="evidence" value="ECO:0000318"/>
    <property type="project" value="GO_Central"/>
</dbReference>
<dbReference type="GO" id="GO:0005634">
    <property type="term" value="C:nucleus"/>
    <property type="evidence" value="ECO:0000318"/>
    <property type="project" value="GO_Central"/>
</dbReference>
<dbReference type="GO" id="GO:0016567">
    <property type="term" value="P:protein ubiquitination"/>
    <property type="evidence" value="ECO:0007669"/>
    <property type="project" value="UniProtKB-UniPathway"/>
</dbReference>
<dbReference type="FunFam" id="1.25.10.10:FF:001917">
    <property type="entry name" value="DDB1- and CUL4-associated factor homolog 1"/>
    <property type="match status" value="1"/>
</dbReference>
<dbReference type="Gene3D" id="1.25.10.10">
    <property type="entry name" value="Leucine-rich Repeat Variant"/>
    <property type="match status" value="1"/>
</dbReference>
<dbReference type="Gene3D" id="2.130.10.10">
    <property type="entry name" value="YVTN repeat-like/Quinoprotein amine dehydrogenase"/>
    <property type="match status" value="1"/>
</dbReference>
<dbReference type="InterPro" id="IPR011989">
    <property type="entry name" value="ARM-like"/>
</dbReference>
<dbReference type="InterPro" id="IPR016024">
    <property type="entry name" value="ARM-type_fold"/>
</dbReference>
<dbReference type="InterPro" id="IPR006594">
    <property type="entry name" value="LisH"/>
</dbReference>
<dbReference type="InterPro" id="IPR033270">
    <property type="entry name" value="VPRBP/DCAF1"/>
</dbReference>
<dbReference type="InterPro" id="IPR015943">
    <property type="entry name" value="WD40/YVTN_repeat-like_dom_sf"/>
</dbReference>
<dbReference type="InterPro" id="IPR036322">
    <property type="entry name" value="WD40_repeat_dom_sf"/>
</dbReference>
<dbReference type="PANTHER" id="PTHR13129:SF4">
    <property type="entry name" value="DDB1- AND CUL4-ASSOCIATED FACTOR 1"/>
    <property type="match status" value="1"/>
</dbReference>
<dbReference type="PANTHER" id="PTHR13129">
    <property type="entry name" value="VPRBP PROTEIN-RELATED"/>
    <property type="match status" value="1"/>
</dbReference>
<dbReference type="SMART" id="SM00667">
    <property type="entry name" value="LisH"/>
    <property type="match status" value="1"/>
</dbReference>
<dbReference type="SUPFAM" id="SSF48371">
    <property type="entry name" value="ARM repeat"/>
    <property type="match status" value="1"/>
</dbReference>
<dbReference type="SUPFAM" id="SSF50978">
    <property type="entry name" value="WD40 repeat-like"/>
    <property type="match status" value="1"/>
</dbReference>
<dbReference type="PROSITE" id="PS50896">
    <property type="entry name" value="LISH"/>
    <property type="match status" value="1"/>
</dbReference>
<sequence>MTSKEIYPLRSTGTMMMISDQDLKLSTQLMLRIAELLLEFDANHEQSSFDPIPILKRISELLEQATDIFIKNDPDPLDDRHPHRTHPDSALGNILKIIFKNDDFMTKLVVSYILARDNVELNIQGSRLLLACIPGLDSKVVFSEPDDFIPRLYTWAGSEGTNETLQGYAMGLLAAALENTENASKYRNENALLVPFGLRRLHELQGRSLEEQKKIGQTDFSQLHAEQSTSNGTSIPSIKITSVDGSTKENEKTFVQSTDPPPPKKRRTEPCLTSLLRTEITQRVPSFHNLRNLDDSNSKWDILQPFLIGDQQVYPLSLATYQRFILQYLAACGEYQDLLLQTFEGNALEILFDYIDLEKSKDVRLTFDALKYLTSLLVHRKFALEFVNKGGIPALLKVPKTSLASVGVVTCLYYIAYSNDVMEILCQMSDEIVDETVQYVLWCLEHSHESGMASACMFFSQGLFYKAILRRFDQYDGPRKLHNYIATLTLMQNNEDVELTEEQIHTSTQCTRGVCTTFRSYLTAHIFIKVENYKKLYGNNLPTGMRFPELVQGDCPDYKSMKPYEEVCWQCEAIVTEMLRFTGSSFREAENLRKLGMVRMFLAVRVLSRDWENISPSLRTEMCVHALETLCMMFCLPSIQTELITQHSYNHSNYDGFTILLQTSLGRYDEDPSLRMAALGCIQRCVYVEPECWKAIIQRVKSSEEKSSSASKRQSKYEIIMNHLERMWTEVRKTDGIMALVNLINCKIPLTEADSIRKTATNTLTGLARHPEVRQILAKLPLIAHNGLQNLMREPVCSDKRDIHAAFCKEAVQLLQVIYGRKIHDQQGKEIQSSEKSHRQWVIENTQVSFNQAELLQLIHDHLLKSKLDSVAAMLKSEAKLPDRPASRSINTPILNKPLPSSGNNFSKINDTYPTLAPRTLESEIGGISARRPSNAASLSSPAMATRSHSTDDDVFATPTLPRRYTTSGAFPKKLMISPARQKLRPLTPGESSSGYRPIKDLNSIVTDYFRNQHSTCKNPVTTCPPFSLFYQHKCPELSYQTNVVRNISLRTLDQELLRPHERVYSQWTNERTIFSRFRNWKTIHDHDESYTKATFSVDDEHLIVGLFNGEVHWINVDTGLDEGHTNCHGSALTNIEPSKDGSMMLTSSAFSRPLSALWRLGEALQRVHTYREDSCVKFANTTMQRIVGTCRDKATVYDTETNHVLDTYLSGIDGLQYEKNYASFSPDDKLIFNDGLLWDVRKKNSAIHVFDRLSKITLFGTFHPHGTQIVINSEVYDIRTFRMLHHVPELNRCQVSFNSTGNIMYATEVTDVHCPDYDEKIFSSFRTFETRDYSALTTFEGRRPVIDLCASHQDQKMCVIEKVRPQMSDYMIQASTQLKIVEIGRLKDNEDENDEEEDEQREDHDEDEDSDESGDGDDDEEIGGNSSDRESVFRTLGRLGDESDSGSSVDDNDTLDDLDFENAQNRIIRRQAQRRRQRLNSSENDAELPGSDEGSDEDGDDDEDGEGDPDFDMGAAIDDLVDAVDEEVDEDELGTDGDDDDSGSWRTTNSIDSEDINLDDLDEEEARVVENEGNNERPARPVDPIEAAAAARRAILGRGLRDLRMGIRGGNRRRNGGGLEQAEMLNARAEEQRVSFMEALVRGAEAERREEEGGDDGESSSSSSSDTDEYQSEEEEINSVSTTALNPALRRRNRRPDDEA</sequence>
<feature type="chain" id="PRO_0000287475" description="DDB1- and CUL4-associated factor homolog 1">
    <location>
        <begin position="1"/>
        <end position="1701"/>
    </location>
</feature>
<feature type="domain" description="LisH" evidence="2">
    <location>
        <begin position="851"/>
        <end position="883"/>
    </location>
</feature>
<feature type="repeat" description="WD 1">
    <location>
        <begin position="1086"/>
        <end position="1125"/>
    </location>
</feature>
<feature type="repeat" description="WD 2">
    <location>
        <begin position="1128"/>
        <end position="1169"/>
    </location>
</feature>
<feature type="repeat" description="WD 3">
    <location>
        <begin position="1171"/>
        <end position="1210"/>
    </location>
</feature>
<feature type="repeat" description="WD 4">
    <location>
        <begin position="1215"/>
        <end position="1252"/>
    </location>
</feature>
<feature type="region of interest" description="Disordered" evidence="3">
    <location>
        <begin position="224"/>
        <end position="269"/>
    </location>
</feature>
<feature type="region of interest" description="Disordered" evidence="3">
    <location>
        <begin position="883"/>
        <end position="906"/>
    </location>
</feature>
<feature type="region of interest" description="Disordered" evidence="3">
    <location>
        <begin position="932"/>
        <end position="961"/>
    </location>
</feature>
<feature type="region of interest" description="Disordered" evidence="3">
    <location>
        <begin position="1384"/>
        <end position="1559"/>
    </location>
</feature>
<feature type="region of interest" description="Disordered" evidence="3">
    <location>
        <begin position="1566"/>
        <end position="1585"/>
    </location>
</feature>
<feature type="region of interest" description="Disordered" evidence="3">
    <location>
        <begin position="1641"/>
        <end position="1701"/>
    </location>
</feature>
<feature type="short sequence motif" description="DWD box 1" evidence="1">
    <location>
        <begin position="1237"/>
        <end position="1245"/>
    </location>
</feature>
<feature type="short sequence motif" description="DWD box 2" evidence="1">
    <location>
        <begin position="1275"/>
        <end position="1282"/>
    </location>
</feature>
<feature type="compositionally biased region" description="Polar residues" evidence="3">
    <location>
        <begin position="224"/>
        <end position="245"/>
    </location>
</feature>
<feature type="compositionally biased region" description="Polar residues" evidence="3">
    <location>
        <begin position="888"/>
        <end position="906"/>
    </location>
</feature>
<feature type="compositionally biased region" description="Acidic residues" evidence="3">
    <location>
        <begin position="1390"/>
        <end position="1423"/>
    </location>
</feature>
<feature type="compositionally biased region" description="Acidic residues" evidence="3">
    <location>
        <begin position="1451"/>
        <end position="1461"/>
    </location>
</feature>
<feature type="compositionally biased region" description="Basic residues" evidence="3">
    <location>
        <begin position="1468"/>
        <end position="1479"/>
    </location>
</feature>
<feature type="compositionally biased region" description="Acidic residues" evidence="3">
    <location>
        <begin position="1494"/>
        <end position="1512"/>
    </location>
</feature>
<feature type="compositionally biased region" description="Acidic residues" evidence="3">
    <location>
        <begin position="1520"/>
        <end position="1543"/>
    </location>
</feature>
<feature type="compositionally biased region" description="Basic and acidic residues" evidence="3">
    <location>
        <begin position="1567"/>
        <end position="1581"/>
    </location>
</feature>
<feature type="compositionally biased region" description="Acidic residues" evidence="3">
    <location>
        <begin position="1667"/>
        <end position="1678"/>
    </location>
</feature>
<protein>
    <recommendedName>
        <fullName>DDB1- and CUL4-associated factor homolog 1</fullName>
    </recommendedName>
</protein>
<keyword id="KW-0539">Nucleus</keyword>
<keyword id="KW-1185">Reference proteome</keyword>
<keyword id="KW-0677">Repeat</keyword>
<keyword id="KW-0833">Ubl conjugation pathway</keyword>
<keyword id="KW-0853">WD repeat</keyword>
<comment type="function">
    <text evidence="1">Component of the cul4-rbx1-ddb1-dcaf1 E3 ubiquitin-protein ligase complex, dcaf1 may function as the substrate recognition module within this complex.</text>
</comment>
<comment type="pathway">
    <text>Protein modification; protein ubiquitination.</text>
</comment>
<comment type="subunit">
    <text evidence="1">Component of the cul4-rbx1-ddb1-dcaf1 E3 ubiquitin-protein ligase complex.</text>
</comment>
<comment type="subcellular location">
    <subcellularLocation>
        <location evidence="1">Nucleus</location>
    </subcellularLocation>
</comment>
<comment type="domain">
    <text evidence="1">The DWD boxes are required for interaction with ddb1.</text>
</comment>
<comment type="similarity">
    <text evidence="4">Belongs to the VPRBP/DCAF1 family.</text>
</comment>
<evidence type="ECO:0000250" key="1"/>
<evidence type="ECO:0000255" key="2">
    <source>
        <dbReference type="PROSITE-ProRule" id="PRU00126"/>
    </source>
</evidence>
<evidence type="ECO:0000256" key="3">
    <source>
        <dbReference type="SAM" id="MobiDB-lite"/>
    </source>
</evidence>
<evidence type="ECO:0000305" key="4"/>
<accession>Q21106</accession>
<accession>Q23436</accession>
<organism>
    <name type="scientific">Caenorhabditis elegans</name>
    <dbReference type="NCBI Taxonomy" id="6239"/>
    <lineage>
        <taxon>Eukaryota</taxon>
        <taxon>Metazoa</taxon>
        <taxon>Ecdysozoa</taxon>
        <taxon>Nematoda</taxon>
        <taxon>Chromadorea</taxon>
        <taxon>Rhabditida</taxon>
        <taxon>Rhabditina</taxon>
        <taxon>Rhabditomorpha</taxon>
        <taxon>Rhabditoidea</taxon>
        <taxon>Rhabditidae</taxon>
        <taxon>Peloderinae</taxon>
        <taxon>Caenorhabditis</taxon>
    </lineage>
</organism>
<proteinExistence type="inferred from homology"/>